<name>ARCA_BACC4</name>
<accession>B7H7F6</accession>
<organism>
    <name type="scientific">Bacillus cereus (strain B4264)</name>
    <dbReference type="NCBI Taxonomy" id="405532"/>
    <lineage>
        <taxon>Bacteria</taxon>
        <taxon>Bacillati</taxon>
        <taxon>Bacillota</taxon>
        <taxon>Bacilli</taxon>
        <taxon>Bacillales</taxon>
        <taxon>Bacillaceae</taxon>
        <taxon>Bacillus</taxon>
        <taxon>Bacillus cereus group</taxon>
    </lineage>
</organism>
<protein>
    <recommendedName>
        <fullName evidence="1">Arginine deiminase</fullName>
        <shortName evidence="1">ADI</shortName>
        <ecNumber evidence="1">3.5.3.6</ecNumber>
    </recommendedName>
    <alternativeName>
        <fullName evidence="1">Arginine dihydrolase</fullName>
        <shortName evidence="1">AD</shortName>
    </alternativeName>
</protein>
<proteinExistence type="inferred from homology"/>
<comment type="catalytic activity">
    <reaction evidence="1">
        <text>L-arginine + H2O = L-citrulline + NH4(+)</text>
        <dbReference type="Rhea" id="RHEA:19597"/>
        <dbReference type="ChEBI" id="CHEBI:15377"/>
        <dbReference type="ChEBI" id="CHEBI:28938"/>
        <dbReference type="ChEBI" id="CHEBI:32682"/>
        <dbReference type="ChEBI" id="CHEBI:57743"/>
        <dbReference type="EC" id="3.5.3.6"/>
    </reaction>
</comment>
<comment type="pathway">
    <text evidence="1">Amino-acid degradation; L-arginine degradation via ADI pathway; carbamoyl phosphate from L-arginine: step 1/2.</text>
</comment>
<comment type="subcellular location">
    <subcellularLocation>
        <location evidence="1">Cytoplasm</location>
    </subcellularLocation>
</comment>
<comment type="similarity">
    <text evidence="1">Belongs to the arginine deiminase family.</text>
</comment>
<dbReference type="EC" id="3.5.3.6" evidence="1"/>
<dbReference type="EMBL" id="CP001176">
    <property type="protein sequence ID" value="ACK60913.1"/>
    <property type="molecule type" value="Genomic_DNA"/>
</dbReference>
<dbReference type="RefSeq" id="WP_000682331.1">
    <property type="nucleotide sequence ID" value="NZ_VEHB01000009.1"/>
</dbReference>
<dbReference type="SMR" id="B7H7F6"/>
<dbReference type="GeneID" id="72447209"/>
<dbReference type="KEGG" id="bcb:BCB4264_A0420"/>
<dbReference type="HOGENOM" id="CLU_052662_0_1_9"/>
<dbReference type="UniPathway" id="UPA00254">
    <property type="reaction ID" value="UER00364"/>
</dbReference>
<dbReference type="Proteomes" id="UP000007096">
    <property type="component" value="Chromosome"/>
</dbReference>
<dbReference type="GO" id="GO:0005737">
    <property type="term" value="C:cytoplasm"/>
    <property type="evidence" value="ECO:0007669"/>
    <property type="project" value="UniProtKB-SubCell"/>
</dbReference>
<dbReference type="GO" id="GO:0016990">
    <property type="term" value="F:arginine deiminase activity"/>
    <property type="evidence" value="ECO:0007669"/>
    <property type="project" value="UniProtKB-UniRule"/>
</dbReference>
<dbReference type="GO" id="GO:0019547">
    <property type="term" value="P:arginine catabolic process to ornithine"/>
    <property type="evidence" value="ECO:0007669"/>
    <property type="project" value="UniProtKB-UniRule"/>
</dbReference>
<dbReference type="GO" id="GO:0019546">
    <property type="term" value="P:arginine deiminase pathway"/>
    <property type="evidence" value="ECO:0007669"/>
    <property type="project" value="TreeGrafter"/>
</dbReference>
<dbReference type="FunFam" id="1.10.3930.10:FF:000001">
    <property type="entry name" value="Arginine deiminase"/>
    <property type="match status" value="1"/>
</dbReference>
<dbReference type="Gene3D" id="1.10.3930.10">
    <property type="entry name" value="Arginine deiminase"/>
    <property type="match status" value="1"/>
</dbReference>
<dbReference type="Gene3D" id="3.75.10.10">
    <property type="entry name" value="L-arginine/glycine Amidinotransferase, Chain A"/>
    <property type="match status" value="1"/>
</dbReference>
<dbReference type="HAMAP" id="MF_00242">
    <property type="entry name" value="Arg_deiminase"/>
    <property type="match status" value="1"/>
</dbReference>
<dbReference type="InterPro" id="IPR003876">
    <property type="entry name" value="Arg_deiminase"/>
</dbReference>
<dbReference type="NCBIfam" id="TIGR01078">
    <property type="entry name" value="arcA"/>
    <property type="match status" value="1"/>
</dbReference>
<dbReference type="NCBIfam" id="NF002381">
    <property type="entry name" value="PRK01388.1"/>
    <property type="match status" value="1"/>
</dbReference>
<dbReference type="PANTHER" id="PTHR47271">
    <property type="entry name" value="ARGININE DEIMINASE"/>
    <property type="match status" value="1"/>
</dbReference>
<dbReference type="PANTHER" id="PTHR47271:SF2">
    <property type="entry name" value="ARGININE DEIMINASE"/>
    <property type="match status" value="1"/>
</dbReference>
<dbReference type="Pfam" id="PF02274">
    <property type="entry name" value="ADI"/>
    <property type="match status" value="1"/>
</dbReference>
<dbReference type="PIRSF" id="PIRSF006356">
    <property type="entry name" value="Arg_deiminase"/>
    <property type="match status" value="1"/>
</dbReference>
<dbReference type="PRINTS" id="PR01466">
    <property type="entry name" value="ARGDEIMINASE"/>
</dbReference>
<dbReference type="SUPFAM" id="SSF55909">
    <property type="entry name" value="Pentein"/>
    <property type="match status" value="1"/>
</dbReference>
<sequence length="410" mass="46880">MKHPIHVTSEIGELQTVLLKRPGKEVENLTPDYLQQLLFDDIPYLPIIQKEHDYFAQTLRNRGVEVLYLEKLAAEALVDKKLREEFVDRILKEGQADVNVAHQTLKEYLLSFSNEELIQKIMGGVRKNEIETSKKTHLYELMEDHYPFYLDPMPNLYFTRDPAASVGDGLTINKMREPARRRESLFMEYIIKYHPRFAKHNVPIWLDRDYKFPIEGGDELILNEETIAIGVSARTSAKAIERLAKNLFSRQNKIKKVLAIEIPKCRAFMHLDTVFTMVDYDKFTIHPAIQGPKGNMNIYILEKGSDEETLKITHRTSLMEALKEVLGLSELVLIPCGGGDVIASAREQWNDGSNTLAIAPGVVVTYDRNYVSNTLLREHGIEVIEVLSSELSRGRGGPRCMSMPIVRKDI</sequence>
<evidence type="ECO:0000255" key="1">
    <source>
        <dbReference type="HAMAP-Rule" id="MF_00242"/>
    </source>
</evidence>
<keyword id="KW-0056">Arginine metabolism</keyword>
<keyword id="KW-0963">Cytoplasm</keyword>
<keyword id="KW-0378">Hydrolase</keyword>
<gene>
    <name evidence="1" type="primary">arcA</name>
    <name type="ordered locus">BCB4264_A0420</name>
</gene>
<reference key="1">
    <citation type="submission" date="2008-10" db="EMBL/GenBank/DDBJ databases">
        <title>Genome sequence of Bacillus cereus B4264.</title>
        <authorList>
            <person name="Dodson R.J."/>
            <person name="Durkin A.S."/>
            <person name="Rosovitz M.J."/>
            <person name="Rasko D.A."/>
            <person name="Hoffmaster A."/>
            <person name="Ravel J."/>
            <person name="Sutton G."/>
        </authorList>
    </citation>
    <scope>NUCLEOTIDE SEQUENCE [LARGE SCALE GENOMIC DNA]</scope>
    <source>
        <strain>B4264</strain>
    </source>
</reference>
<feature type="chain" id="PRO_1000119035" description="Arginine deiminase">
    <location>
        <begin position="1"/>
        <end position="410"/>
    </location>
</feature>
<feature type="active site" description="Amidino-cysteine intermediate" evidence="1">
    <location>
        <position position="400"/>
    </location>
</feature>